<protein>
    <recommendedName>
        <fullName evidence="1">DNA-directed RNA polymerase subunit beta</fullName>
        <shortName evidence="1">RNAP subunit beta</shortName>
        <ecNumber evidence="1">2.7.7.6</ecNumber>
    </recommendedName>
    <alternativeName>
        <fullName evidence="1">RNA polymerase subunit beta</fullName>
    </alternativeName>
    <alternativeName>
        <fullName evidence="1">Transcriptase subunit beta</fullName>
    </alternativeName>
</protein>
<sequence>MVYSYSEKKRIRKDFGKRPKVLDIPYLLSIQLDSFKKFTDQDPTGERGFEAAFRSVFPIKSFSGNSELQYVSYKLGEPVFDVKECQIRGITYAAPLRVKLRMVLYDREAAPGTVKDIKEQEVYMGDIPLMTNNGTFVINGTERVIVSQLHRSPGVFFDHDRGKTHSSGKVLYNARIIPYRGSWLDFEFDPKDALFVRIDRRRKLPASIMLRALDYSTQDILDLFFDRVNFKIKKDSLVMDLVPERLRGETASYDIKDSDGSILVEKGRRVTARHIRQLEKSKTTELEVPVDYIEGKIAGQDYIDPDTGEVLVSANAEITLEDLAKLSMAGIKEISTLYINDLDNGAYMSDTLRIDSTTNRLEALVEIYRMMRPGEPPTKDAAEGLFQNLFFSEERYDLSKVGRMKFNRRLSIGEDEGSGILSKEDIVAVMKNIITIRNGGDEVDDIDHLGNRRIRSVGEMAENQFRVGLVRVERAVRERLSLGDLNELMPQDLINAKPISAAVKEFFGSSQLSQFMDQNNPLSEVTHKRRISALGPGGLTRERAGFEVRDVHPTHYGRLCPIETPEGPNIGLINSLASFARTNSYGFLETPYRKVEDGVVTDQIDYLSAIEEGRYVIAQANIDIDKNGRLLEEQVACRHKGDSTFMRGTDIQYMDVSPQQIISVAASLIPFLEHDDANRALMGANMQRQAVPTLRADKPLVGTGIERIIAVDSGVVVVAKRGGSIDYVDASRIVVKVNESELRPGEAGIDIYNLTKYTRSNQNTCINQRPCCSVGDPVVVGDVLADGPSTDLGDLAFGQNMRIAFMPWNGYNFEDSILISERVAQEDRFTTIHIQELSCIARDTKLGSEEITADIPNVGESALSKLDESGIVYIGAEVKGGDILVGKVTPKGETQLTPEEKLLRAIFGEKASDVKDSSLRVPNSVKGTIIDVQVFTRDGVEKDKRAVEIEEMHIAQAKKDLTEEFKILEEGVYGRARNLLLNAGFEQAQLDAIPRSHLLVQTIDDEAKQTELEQLAEQHDELKADFDKKFEIKRRKITQGDDLAPGVLKIVKVYLAVKRTIQPGDKMAGRHGNKGVISKINPVEDMPYDENGNPIDIVLNPLGVPSRMNIGQILEVHMGAAAKGIGDQITAMLEEQRQLAEIRGYIKEVYELGDEVLQRVDIDSFTDDEVLRLAKNLKGGIPIATPAFDGAKEKEIKEMLALAKLPTSGQRTLYDGRTGNEFERKVTVGYMYMLKLNHLVDDKMHARSTGSYSLVTQQPLGGKAQFGGQRFGEMEVWALEAYGAAYTLQEMLTVKSDDVNGRTQMYKNIVDGNYQMQPGMPESFNVLLKEIRSLGINIELDQD</sequence>
<accession>Q9KW14</accession>
<comment type="function">
    <text evidence="1">DNA-dependent RNA polymerase catalyzes the transcription of DNA into RNA using the four ribonucleoside triphosphates as substrates.</text>
</comment>
<comment type="catalytic activity">
    <reaction evidence="1">
        <text>RNA(n) + a ribonucleoside 5'-triphosphate = RNA(n+1) + diphosphate</text>
        <dbReference type="Rhea" id="RHEA:21248"/>
        <dbReference type="Rhea" id="RHEA-COMP:14527"/>
        <dbReference type="Rhea" id="RHEA-COMP:17342"/>
        <dbReference type="ChEBI" id="CHEBI:33019"/>
        <dbReference type="ChEBI" id="CHEBI:61557"/>
        <dbReference type="ChEBI" id="CHEBI:140395"/>
        <dbReference type="EC" id="2.7.7.6"/>
    </reaction>
</comment>
<comment type="subunit">
    <text evidence="1">The RNAP catalytic core consists of 2 alpha, 1 beta, 1 beta' and 1 omega subunit. When a sigma factor is associated with the core the holoenzyme is formed, which can initiate transcription.</text>
</comment>
<comment type="similarity">
    <text evidence="1">Belongs to the RNA polymerase beta chain family.</text>
</comment>
<name>RPOB_SHEVI</name>
<keyword id="KW-0240">DNA-directed RNA polymerase</keyword>
<keyword id="KW-0548">Nucleotidyltransferase</keyword>
<keyword id="KW-0804">Transcription</keyword>
<keyword id="KW-0808">Transferase</keyword>
<feature type="chain" id="PRO_0000047955" description="DNA-directed RNA polymerase subunit beta">
    <location>
        <begin position="1"/>
        <end position="1343"/>
    </location>
</feature>
<gene>
    <name evidence="1" type="primary">rpoB</name>
</gene>
<dbReference type="EC" id="2.7.7.6" evidence="1"/>
<dbReference type="EMBL" id="AB045725">
    <property type="protein sequence ID" value="BAA99392.1"/>
    <property type="molecule type" value="Genomic_DNA"/>
</dbReference>
<dbReference type="SMR" id="Q9KW14"/>
<dbReference type="GO" id="GO:0000428">
    <property type="term" value="C:DNA-directed RNA polymerase complex"/>
    <property type="evidence" value="ECO:0007669"/>
    <property type="project" value="UniProtKB-KW"/>
</dbReference>
<dbReference type="GO" id="GO:0003677">
    <property type="term" value="F:DNA binding"/>
    <property type="evidence" value="ECO:0007669"/>
    <property type="project" value="UniProtKB-UniRule"/>
</dbReference>
<dbReference type="GO" id="GO:0003899">
    <property type="term" value="F:DNA-directed RNA polymerase activity"/>
    <property type="evidence" value="ECO:0007669"/>
    <property type="project" value="UniProtKB-UniRule"/>
</dbReference>
<dbReference type="GO" id="GO:0032549">
    <property type="term" value="F:ribonucleoside binding"/>
    <property type="evidence" value="ECO:0007669"/>
    <property type="project" value="InterPro"/>
</dbReference>
<dbReference type="GO" id="GO:0006351">
    <property type="term" value="P:DNA-templated transcription"/>
    <property type="evidence" value="ECO:0007669"/>
    <property type="project" value="UniProtKB-UniRule"/>
</dbReference>
<dbReference type="CDD" id="cd00653">
    <property type="entry name" value="RNA_pol_B_RPB2"/>
    <property type="match status" value="1"/>
</dbReference>
<dbReference type="FunFam" id="2.40.270.10:FF:000003">
    <property type="entry name" value="DNA-directed RNA polymerase subunit beta"/>
    <property type="match status" value="1"/>
</dbReference>
<dbReference type="FunFam" id="2.40.270.10:FF:000004">
    <property type="entry name" value="DNA-directed RNA polymerase subunit beta"/>
    <property type="match status" value="1"/>
</dbReference>
<dbReference type="FunFam" id="2.40.50.100:FF:000006">
    <property type="entry name" value="DNA-directed RNA polymerase subunit beta"/>
    <property type="match status" value="1"/>
</dbReference>
<dbReference type="FunFam" id="2.40.50.150:FF:000001">
    <property type="entry name" value="DNA-directed RNA polymerase subunit beta"/>
    <property type="match status" value="1"/>
</dbReference>
<dbReference type="FunFam" id="3.90.1100.10:FF:000002">
    <property type="entry name" value="DNA-directed RNA polymerase subunit beta"/>
    <property type="match status" value="1"/>
</dbReference>
<dbReference type="FunFam" id="3.90.1110.10:FF:000001">
    <property type="entry name" value="DNA-directed RNA polymerase subunit beta"/>
    <property type="match status" value="1"/>
</dbReference>
<dbReference type="FunFam" id="3.90.1110.10:FF:000004">
    <property type="entry name" value="DNA-directed RNA polymerase subunit beta"/>
    <property type="match status" value="1"/>
</dbReference>
<dbReference type="FunFam" id="3.90.1800.10:FF:000001">
    <property type="entry name" value="DNA-directed RNA polymerase subunit beta"/>
    <property type="match status" value="1"/>
</dbReference>
<dbReference type="Gene3D" id="2.40.50.100">
    <property type="match status" value="1"/>
</dbReference>
<dbReference type="Gene3D" id="2.40.50.150">
    <property type="match status" value="1"/>
</dbReference>
<dbReference type="Gene3D" id="3.90.1100.10">
    <property type="match status" value="2"/>
</dbReference>
<dbReference type="Gene3D" id="2.30.150.10">
    <property type="entry name" value="DNA-directed RNA polymerase, beta subunit, external 1 domain"/>
    <property type="match status" value="1"/>
</dbReference>
<dbReference type="Gene3D" id="2.40.270.10">
    <property type="entry name" value="DNA-directed RNA polymerase, subunit 2, domain 6"/>
    <property type="match status" value="1"/>
</dbReference>
<dbReference type="Gene3D" id="3.90.1800.10">
    <property type="entry name" value="RNA polymerase alpha subunit dimerisation domain"/>
    <property type="match status" value="1"/>
</dbReference>
<dbReference type="Gene3D" id="3.90.1110.10">
    <property type="entry name" value="RNA polymerase Rpb2, domain 2"/>
    <property type="match status" value="1"/>
</dbReference>
<dbReference type="HAMAP" id="MF_01321">
    <property type="entry name" value="RNApol_bact_RpoB"/>
    <property type="match status" value="1"/>
</dbReference>
<dbReference type="InterPro" id="IPR042107">
    <property type="entry name" value="DNA-dir_RNA_pol_bsu_ext_1_sf"/>
</dbReference>
<dbReference type="InterPro" id="IPR019462">
    <property type="entry name" value="DNA-dir_RNA_pol_bsu_external_1"/>
</dbReference>
<dbReference type="InterPro" id="IPR015712">
    <property type="entry name" value="DNA-dir_RNA_pol_su2"/>
</dbReference>
<dbReference type="InterPro" id="IPR007120">
    <property type="entry name" value="DNA-dir_RNAP_su2_dom"/>
</dbReference>
<dbReference type="InterPro" id="IPR037033">
    <property type="entry name" value="DNA-dir_RNAP_su2_hyb_sf"/>
</dbReference>
<dbReference type="InterPro" id="IPR010243">
    <property type="entry name" value="RNA_pol_bsu_bac"/>
</dbReference>
<dbReference type="InterPro" id="IPR007121">
    <property type="entry name" value="RNA_pol_bsu_CS"/>
</dbReference>
<dbReference type="InterPro" id="IPR007644">
    <property type="entry name" value="RNA_pol_bsu_protrusion"/>
</dbReference>
<dbReference type="InterPro" id="IPR007642">
    <property type="entry name" value="RNA_pol_Rpb2_2"/>
</dbReference>
<dbReference type="InterPro" id="IPR037034">
    <property type="entry name" value="RNA_pol_Rpb2_2_sf"/>
</dbReference>
<dbReference type="InterPro" id="IPR007645">
    <property type="entry name" value="RNA_pol_Rpb2_3"/>
</dbReference>
<dbReference type="InterPro" id="IPR007641">
    <property type="entry name" value="RNA_pol_Rpb2_7"/>
</dbReference>
<dbReference type="InterPro" id="IPR014724">
    <property type="entry name" value="RNA_pol_RPB2_OB-fold"/>
</dbReference>
<dbReference type="NCBIfam" id="NF001616">
    <property type="entry name" value="PRK00405.1"/>
    <property type="match status" value="1"/>
</dbReference>
<dbReference type="NCBIfam" id="TIGR02013">
    <property type="entry name" value="rpoB"/>
    <property type="match status" value="1"/>
</dbReference>
<dbReference type="PANTHER" id="PTHR20856">
    <property type="entry name" value="DNA-DIRECTED RNA POLYMERASE I SUBUNIT 2"/>
    <property type="match status" value="1"/>
</dbReference>
<dbReference type="Pfam" id="PF04563">
    <property type="entry name" value="RNA_pol_Rpb2_1"/>
    <property type="match status" value="1"/>
</dbReference>
<dbReference type="Pfam" id="PF04561">
    <property type="entry name" value="RNA_pol_Rpb2_2"/>
    <property type="match status" value="2"/>
</dbReference>
<dbReference type="Pfam" id="PF04565">
    <property type="entry name" value="RNA_pol_Rpb2_3"/>
    <property type="match status" value="1"/>
</dbReference>
<dbReference type="Pfam" id="PF10385">
    <property type="entry name" value="RNA_pol_Rpb2_45"/>
    <property type="match status" value="1"/>
</dbReference>
<dbReference type="Pfam" id="PF00562">
    <property type="entry name" value="RNA_pol_Rpb2_6"/>
    <property type="match status" value="1"/>
</dbReference>
<dbReference type="Pfam" id="PF04560">
    <property type="entry name" value="RNA_pol_Rpb2_7"/>
    <property type="match status" value="1"/>
</dbReference>
<dbReference type="SUPFAM" id="SSF64484">
    <property type="entry name" value="beta and beta-prime subunits of DNA dependent RNA-polymerase"/>
    <property type="match status" value="1"/>
</dbReference>
<dbReference type="PROSITE" id="PS01166">
    <property type="entry name" value="RNA_POL_BETA"/>
    <property type="match status" value="1"/>
</dbReference>
<evidence type="ECO:0000255" key="1">
    <source>
        <dbReference type="HAMAP-Rule" id="MF_01321"/>
    </source>
</evidence>
<organism>
    <name type="scientific">Shewanella violacea</name>
    <dbReference type="NCBI Taxonomy" id="60217"/>
    <lineage>
        <taxon>Bacteria</taxon>
        <taxon>Pseudomonadati</taxon>
        <taxon>Pseudomonadota</taxon>
        <taxon>Gammaproteobacteria</taxon>
        <taxon>Alteromonadales</taxon>
        <taxon>Shewanellaceae</taxon>
        <taxon>Shewanella</taxon>
    </lineage>
</organism>
<reference key="1">
    <citation type="submission" date="2000-07" db="EMBL/GenBank/DDBJ databases">
        <title>Isolation of rpoB and rpoC genes from deep-sea piezophilic bacterium Shewanella violacea and its overexpression in Escherichia coli.</title>
        <authorList>
            <person name="Nakasone K."/>
            <person name="Ikegami A."/>
            <person name="Sakai Y."/>
            <person name="Kato C."/>
            <person name="Horikoshi K."/>
        </authorList>
    </citation>
    <scope>NUCLEOTIDE SEQUENCE [GENOMIC DNA]</scope>
</reference>
<proteinExistence type="inferred from homology"/>